<organism>
    <name type="scientific">Brucella abortus (strain S19)</name>
    <dbReference type="NCBI Taxonomy" id="430066"/>
    <lineage>
        <taxon>Bacteria</taxon>
        <taxon>Pseudomonadati</taxon>
        <taxon>Pseudomonadota</taxon>
        <taxon>Alphaproteobacteria</taxon>
        <taxon>Hyphomicrobiales</taxon>
        <taxon>Brucellaceae</taxon>
        <taxon>Brucella/Ochrobactrum group</taxon>
        <taxon>Brucella</taxon>
    </lineage>
</organism>
<name>MIAB_BRUA1</name>
<comment type="function">
    <text evidence="1">Catalyzes the methylthiolation of N6-(dimethylallyl)adenosine (i(6)A), leading to the formation of 2-methylthio-N6-(dimethylallyl)adenosine (ms(2)i(6)A) at position 37 in tRNAs that read codons beginning with uridine.</text>
</comment>
<comment type="catalytic activity">
    <reaction evidence="1">
        <text>N(6)-dimethylallyladenosine(37) in tRNA + (sulfur carrier)-SH + AH2 + 2 S-adenosyl-L-methionine = 2-methylsulfanyl-N(6)-dimethylallyladenosine(37) in tRNA + (sulfur carrier)-H + 5'-deoxyadenosine + L-methionine + A + S-adenosyl-L-homocysteine + 2 H(+)</text>
        <dbReference type="Rhea" id="RHEA:37067"/>
        <dbReference type="Rhea" id="RHEA-COMP:10375"/>
        <dbReference type="Rhea" id="RHEA-COMP:10376"/>
        <dbReference type="Rhea" id="RHEA-COMP:14737"/>
        <dbReference type="Rhea" id="RHEA-COMP:14739"/>
        <dbReference type="ChEBI" id="CHEBI:13193"/>
        <dbReference type="ChEBI" id="CHEBI:15378"/>
        <dbReference type="ChEBI" id="CHEBI:17319"/>
        <dbReference type="ChEBI" id="CHEBI:17499"/>
        <dbReference type="ChEBI" id="CHEBI:29917"/>
        <dbReference type="ChEBI" id="CHEBI:57844"/>
        <dbReference type="ChEBI" id="CHEBI:57856"/>
        <dbReference type="ChEBI" id="CHEBI:59789"/>
        <dbReference type="ChEBI" id="CHEBI:64428"/>
        <dbReference type="ChEBI" id="CHEBI:74415"/>
        <dbReference type="ChEBI" id="CHEBI:74417"/>
        <dbReference type="EC" id="2.8.4.3"/>
    </reaction>
</comment>
<comment type="cofactor">
    <cofactor evidence="1">
        <name>[4Fe-4S] cluster</name>
        <dbReference type="ChEBI" id="CHEBI:49883"/>
    </cofactor>
    <text evidence="1">Binds 2 [4Fe-4S] clusters. One cluster is coordinated with 3 cysteines and an exchangeable S-adenosyl-L-methionine.</text>
</comment>
<comment type="subunit">
    <text evidence="1">Monomer.</text>
</comment>
<comment type="subcellular location">
    <subcellularLocation>
        <location evidence="1">Cytoplasm</location>
    </subcellularLocation>
</comment>
<comment type="similarity">
    <text evidence="1">Belongs to the methylthiotransferase family. MiaB subfamily.</text>
</comment>
<accession>B2S9E5</accession>
<feature type="chain" id="PRO_0000374165" description="tRNA-2-methylthio-N(6)-dimethylallyladenosine synthase">
    <location>
        <begin position="1"/>
        <end position="467"/>
    </location>
</feature>
<feature type="domain" description="MTTase N-terminal" evidence="1">
    <location>
        <begin position="23"/>
        <end position="143"/>
    </location>
</feature>
<feature type="domain" description="Radical SAM core" evidence="2">
    <location>
        <begin position="170"/>
        <end position="402"/>
    </location>
</feature>
<feature type="domain" description="TRAM" evidence="1">
    <location>
        <begin position="405"/>
        <end position="467"/>
    </location>
</feature>
<feature type="region of interest" description="Disordered" evidence="3">
    <location>
        <begin position="1"/>
        <end position="20"/>
    </location>
</feature>
<feature type="binding site" evidence="1">
    <location>
        <position position="32"/>
    </location>
    <ligand>
        <name>[4Fe-4S] cluster</name>
        <dbReference type="ChEBI" id="CHEBI:49883"/>
        <label>1</label>
    </ligand>
</feature>
<feature type="binding site" evidence="1">
    <location>
        <position position="68"/>
    </location>
    <ligand>
        <name>[4Fe-4S] cluster</name>
        <dbReference type="ChEBI" id="CHEBI:49883"/>
        <label>1</label>
    </ligand>
</feature>
<feature type="binding site" evidence="1">
    <location>
        <position position="106"/>
    </location>
    <ligand>
        <name>[4Fe-4S] cluster</name>
        <dbReference type="ChEBI" id="CHEBI:49883"/>
        <label>1</label>
    </ligand>
</feature>
<feature type="binding site" evidence="1">
    <location>
        <position position="184"/>
    </location>
    <ligand>
        <name>[4Fe-4S] cluster</name>
        <dbReference type="ChEBI" id="CHEBI:49883"/>
        <label>2</label>
        <note>4Fe-4S-S-AdoMet</note>
    </ligand>
</feature>
<feature type="binding site" evidence="1">
    <location>
        <position position="188"/>
    </location>
    <ligand>
        <name>[4Fe-4S] cluster</name>
        <dbReference type="ChEBI" id="CHEBI:49883"/>
        <label>2</label>
        <note>4Fe-4S-S-AdoMet</note>
    </ligand>
</feature>
<feature type="binding site" evidence="1">
    <location>
        <position position="191"/>
    </location>
    <ligand>
        <name>[4Fe-4S] cluster</name>
        <dbReference type="ChEBI" id="CHEBI:49883"/>
        <label>2</label>
        <note>4Fe-4S-S-AdoMet</note>
    </ligand>
</feature>
<sequence length="467" mass="52337">MSDDTTQIEPAMAQETSPRANTRKVFVKTYGCQMNVYDSQRMADSLAAEGYVATDTPDDADLVLLNTCHIREKASEKLYSALGRLRKMRDARAADGKELTIGVAGCVAQAEGQEILRRAPNVDLVIGPQTYHRLPNALARVRGGEKVVETDYAIEDKFEHLPAPRREETRKRGVSAFLTVQEGCDKFCTFCVVPYTRGSEVSRSVKQIVAEAERLADSGVRELTLLGQNVNAWHGEGEDGREWGLGELLFRLARIPGIARLRYTTSHPRDMDDSLIAAHRDLRQLMPYLHLPVQSGSDRILKAMNRRHKADEYLRLIERIRNVRPDMALSGDFIVGFPGETDQDFEDTMQLVRDVNYAQAYSFKYSPRPGTPGADLDDHVEEAVKDERLQRLQALLSAQQYAFQDSMIGRKMDVLLEKPGREAGQMVGRSPWLLPVIIDDNKDRVGDIIHVKIVSTGTNSLIAQKLA</sequence>
<dbReference type="EC" id="2.8.4.3" evidence="1"/>
<dbReference type="EMBL" id="CP000887">
    <property type="protein sequence ID" value="ACD73497.1"/>
    <property type="molecule type" value="Genomic_DNA"/>
</dbReference>
<dbReference type="RefSeq" id="WP_002965216.1">
    <property type="nucleotide sequence ID" value="NC_010742.1"/>
</dbReference>
<dbReference type="SMR" id="B2S9E5"/>
<dbReference type="GeneID" id="93017544"/>
<dbReference type="KEGG" id="bmc:BAbS19_I20150"/>
<dbReference type="HOGENOM" id="CLU_018697_2_0_5"/>
<dbReference type="Proteomes" id="UP000002565">
    <property type="component" value="Chromosome 1"/>
</dbReference>
<dbReference type="GO" id="GO:0005829">
    <property type="term" value="C:cytosol"/>
    <property type="evidence" value="ECO:0007669"/>
    <property type="project" value="TreeGrafter"/>
</dbReference>
<dbReference type="GO" id="GO:0051539">
    <property type="term" value="F:4 iron, 4 sulfur cluster binding"/>
    <property type="evidence" value="ECO:0007669"/>
    <property type="project" value="UniProtKB-UniRule"/>
</dbReference>
<dbReference type="GO" id="GO:0046872">
    <property type="term" value="F:metal ion binding"/>
    <property type="evidence" value="ECO:0007669"/>
    <property type="project" value="UniProtKB-KW"/>
</dbReference>
<dbReference type="GO" id="GO:0035597">
    <property type="term" value="F:N6-isopentenyladenosine methylthiotransferase activity"/>
    <property type="evidence" value="ECO:0007669"/>
    <property type="project" value="TreeGrafter"/>
</dbReference>
<dbReference type="CDD" id="cd01335">
    <property type="entry name" value="Radical_SAM"/>
    <property type="match status" value="1"/>
</dbReference>
<dbReference type="FunFam" id="3.40.50.12160:FF:000003">
    <property type="entry name" value="CDK5 regulatory subunit-associated protein 1"/>
    <property type="match status" value="1"/>
</dbReference>
<dbReference type="FunFam" id="3.80.30.20:FF:000001">
    <property type="entry name" value="tRNA-2-methylthio-N(6)-dimethylallyladenosine synthase 2"/>
    <property type="match status" value="1"/>
</dbReference>
<dbReference type="Gene3D" id="3.40.50.12160">
    <property type="entry name" value="Methylthiotransferase, N-terminal domain"/>
    <property type="match status" value="1"/>
</dbReference>
<dbReference type="Gene3D" id="3.80.30.20">
    <property type="entry name" value="tm_1862 like domain"/>
    <property type="match status" value="1"/>
</dbReference>
<dbReference type="HAMAP" id="MF_01864">
    <property type="entry name" value="tRNA_metthiotr_MiaB"/>
    <property type="match status" value="1"/>
</dbReference>
<dbReference type="InterPro" id="IPR006638">
    <property type="entry name" value="Elp3/MiaA/NifB-like_rSAM"/>
</dbReference>
<dbReference type="InterPro" id="IPR005839">
    <property type="entry name" value="Methylthiotransferase"/>
</dbReference>
<dbReference type="InterPro" id="IPR020612">
    <property type="entry name" value="Methylthiotransferase_CS"/>
</dbReference>
<dbReference type="InterPro" id="IPR013848">
    <property type="entry name" value="Methylthiotransferase_N"/>
</dbReference>
<dbReference type="InterPro" id="IPR038135">
    <property type="entry name" value="Methylthiotransferase_N_sf"/>
</dbReference>
<dbReference type="InterPro" id="IPR006463">
    <property type="entry name" value="MiaB_methiolase"/>
</dbReference>
<dbReference type="InterPro" id="IPR007197">
    <property type="entry name" value="rSAM"/>
</dbReference>
<dbReference type="InterPro" id="IPR023404">
    <property type="entry name" value="rSAM_horseshoe"/>
</dbReference>
<dbReference type="InterPro" id="IPR002792">
    <property type="entry name" value="TRAM_dom"/>
</dbReference>
<dbReference type="NCBIfam" id="TIGR01574">
    <property type="entry name" value="miaB-methiolase"/>
    <property type="match status" value="1"/>
</dbReference>
<dbReference type="NCBIfam" id="TIGR00089">
    <property type="entry name" value="MiaB/RimO family radical SAM methylthiotransferase"/>
    <property type="match status" value="1"/>
</dbReference>
<dbReference type="PANTHER" id="PTHR43020">
    <property type="entry name" value="CDK5 REGULATORY SUBUNIT-ASSOCIATED PROTEIN 1"/>
    <property type="match status" value="1"/>
</dbReference>
<dbReference type="PANTHER" id="PTHR43020:SF2">
    <property type="entry name" value="MITOCHONDRIAL TRNA METHYLTHIOTRANSFERASE CDK5RAP1"/>
    <property type="match status" value="1"/>
</dbReference>
<dbReference type="Pfam" id="PF04055">
    <property type="entry name" value="Radical_SAM"/>
    <property type="match status" value="1"/>
</dbReference>
<dbReference type="Pfam" id="PF01938">
    <property type="entry name" value="TRAM"/>
    <property type="match status" value="1"/>
</dbReference>
<dbReference type="Pfam" id="PF00919">
    <property type="entry name" value="UPF0004"/>
    <property type="match status" value="1"/>
</dbReference>
<dbReference type="SFLD" id="SFLDF00273">
    <property type="entry name" value="(dimethylallyl)adenosine_tRNA"/>
    <property type="match status" value="1"/>
</dbReference>
<dbReference type="SFLD" id="SFLDG01082">
    <property type="entry name" value="B12-binding_domain_containing"/>
    <property type="match status" value="1"/>
</dbReference>
<dbReference type="SFLD" id="SFLDS00029">
    <property type="entry name" value="Radical_SAM"/>
    <property type="match status" value="1"/>
</dbReference>
<dbReference type="SMART" id="SM00729">
    <property type="entry name" value="Elp3"/>
    <property type="match status" value="1"/>
</dbReference>
<dbReference type="SUPFAM" id="SSF102114">
    <property type="entry name" value="Radical SAM enzymes"/>
    <property type="match status" value="1"/>
</dbReference>
<dbReference type="PROSITE" id="PS51449">
    <property type="entry name" value="MTTASE_N"/>
    <property type="match status" value="1"/>
</dbReference>
<dbReference type="PROSITE" id="PS01278">
    <property type="entry name" value="MTTASE_RADICAL"/>
    <property type="match status" value="1"/>
</dbReference>
<dbReference type="PROSITE" id="PS51918">
    <property type="entry name" value="RADICAL_SAM"/>
    <property type="match status" value="1"/>
</dbReference>
<dbReference type="PROSITE" id="PS50926">
    <property type="entry name" value="TRAM"/>
    <property type="match status" value="1"/>
</dbReference>
<proteinExistence type="inferred from homology"/>
<gene>
    <name evidence="1" type="primary">miaB</name>
    <name type="ordered locus">BAbS19_I20150</name>
</gene>
<protein>
    <recommendedName>
        <fullName evidence="1">tRNA-2-methylthio-N(6)-dimethylallyladenosine synthase</fullName>
        <ecNumber evidence="1">2.8.4.3</ecNumber>
    </recommendedName>
    <alternativeName>
        <fullName evidence="1">(Dimethylallyl)adenosine tRNA methylthiotransferase MiaB</fullName>
    </alternativeName>
    <alternativeName>
        <fullName evidence="1">tRNA-i(6)A37 methylthiotransferase</fullName>
    </alternativeName>
</protein>
<keyword id="KW-0004">4Fe-4S</keyword>
<keyword id="KW-0963">Cytoplasm</keyword>
<keyword id="KW-0408">Iron</keyword>
<keyword id="KW-0411">Iron-sulfur</keyword>
<keyword id="KW-0479">Metal-binding</keyword>
<keyword id="KW-0949">S-adenosyl-L-methionine</keyword>
<keyword id="KW-0808">Transferase</keyword>
<keyword id="KW-0819">tRNA processing</keyword>
<evidence type="ECO:0000255" key="1">
    <source>
        <dbReference type="HAMAP-Rule" id="MF_01864"/>
    </source>
</evidence>
<evidence type="ECO:0000255" key="2">
    <source>
        <dbReference type="PROSITE-ProRule" id="PRU01266"/>
    </source>
</evidence>
<evidence type="ECO:0000256" key="3">
    <source>
        <dbReference type="SAM" id="MobiDB-lite"/>
    </source>
</evidence>
<reference key="1">
    <citation type="journal article" date="2008" name="PLoS ONE">
        <title>Genome sequence of Brucella abortus vaccine strain S19 compared to virulent strains yields candidate virulence genes.</title>
        <authorList>
            <person name="Crasta O.R."/>
            <person name="Folkerts O."/>
            <person name="Fei Z."/>
            <person name="Mane S.P."/>
            <person name="Evans C."/>
            <person name="Martino-Catt S."/>
            <person name="Bricker B."/>
            <person name="Yu G."/>
            <person name="Du L."/>
            <person name="Sobral B.W."/>
        </authorList>
    </citation>
    <scope>NUCLEOTIDE SEQUENCE [LARGE SCALE GENOMIC DNA]</scope>
    <source>
        <strain>S19</strain>
    </source>
</reference>